<proteinExistence type="evidence at transcript level"/>
<reference key="1">
    <citation type="journal article" date="1995" name="J. Clin. Invest.">
        <title>High levels of glucose-6-phosphatase gene and protein expression reflect an adaptive response in proliferating liver and diabetes.</title>
        <authorList>
            <person name="Haber B.A."/>
            <person name="Chin S."/>
            <person name="Chuang E."/>
            <person name="Buikuisen W."/>
            <person name="Naji A."/>
            <person name="Taub R.A."/>
        </authorList>
    </citation>
    <scope>NUCLEOTIDE SEQUENCE [MRNA]</scope>
    <source>
        <tissue>Liver</tissue>
    </source>
</reference>
<reference key="2">
    <citation type="journal article" date="1994" name="Biochem. Biophys. Res. Commun.">
        <title>Isolation of a cDNA for the catalytic subunit of rat liver glucose-6-phosphatase: regulation of gene expression in FAO hepatoma cells by insulin, dexamethasone and cAMP.</title>
        <authorList>
            <person name="Lange A.J."/>
            <person name="Argaud D.M."/>
            <person name="El-Maghrabi M.R."/>
            <person name="Pan W."/>
            <person name="Subir M."/>
            <person name="Pilkis S.J."/>
        </authorList>
    </citation>
    <scope>NUCLEOTIDE SEQUENCE [MRNA]</scope>
    <source>
        <strain>Sprague-Dawley</strain>
    </source>
</reference>
<reference key="3">
    <citation type="journal article" date="1996" name="Res. Commun. Mol. Pathol. Pharmacol.">
        <title>Expression and distribution of glucose-6-phosphatase catalytic subunit messenger RNA and its changes in the diabetic state.</title>
        <authorList>
            <person name="Shingu R."/>
            <person name="Nakajima H."/>
            <person name="Horikawa Y."/>
            <person name="Hamaguchi T."/>
            <person name="Yamasaki T."/>
            <person name="Miyagawa J."/>
            <person name="Namba M."/>
            <person name="Hanafusa T."/>
            <person name="Matsuzawa Y."/>
        </authorList>
    </citation>
    <scope>NUCLEOTIDE SEQUENCE [MRNA]</scope>
    <source>
        <strain>Sprague-Dawley</strain>
        <tissue>Liver</tissue>
    </source>
</reference>
<reference key="4">
    <citation type="journal article" date="2004" name="Genome Res.">
        <title>The status, quality, and expansion of the NIH full-length cDNA project: the Mammalian Gene Collection (MGC).</title>
        <authorList>
            <consortium name="The MGC Project Team"/>
        </authorList>
    </citation>
    <scope>NUCLEOTIDE SEQUENCE [LARGE SCALE MRNA]</scope>
    <source>
        <tissue>Kidney</tissue>
    </source>
</reference>
<keyword id="KW-0256">Endoplasmic reticulum</keyword>
<keyword id="KW-0312">Gluconeogenesis</keyword>
<keyword id="KW-0325">Glycoprotein</keyword>
<keyword id="KW-0378">Hydrolase</keyword>
<keyword id="KW-0472">Membrane</keyword>
<keyword id="KW-1185">Reference proteome</keyword>
<keyword id="KW-0812">Transmembrane</keyword>
<keyword id="KW-1133">Transmembrane helix</keyword>
<dbReference type="EC" id="3.1.3.9" evidence="2"/>
<dbReference type="EMBL" id="L37333">
    <property type="protein sequence ID" value="AAA74381.1"/>
    <property type="status" value="ALT_INIT"/>
    <property type="molecule type" value="mRNA"/>
</dbReference>
<dbReference type="EMBL" id="U07993">
    <property type="protein sequence ID" value="AAA19966.1"/>
    <property type="molecule type" value="mRNA"/>
</dbReference>
<dbReference type="EMBL" id="D78592">
    <property type="protein sequence ID" value="BAA24348.1"/>
    <property type="molecule type" value="mRNA"/>
</dbReference>
<dbReference type="EMBL" id="BC090067">
    <property type="protein sequence ID" value="AAH90067.2"/>
    <property type="status" value="ALT_INIT"/>
    <property type="molecule type" value="mRNA"/>
</dbReference>
<dbReference type="PIR" id="JC2371">
    <property type="entry name" value="JC2371"/>
</dbReference>
<dbReference type="RefSeq" id="NP_037230.2">
    <property type="nucleotide sequence ID" value="NM_013098.2"/>
</dbReference>
<dbReference type="BioGRID" id="247663">
    <property type="interactions" value="1"/>
</dbReference>
<dbReference type="FunCoup" id="P43428">
    <property type="interactions" value="1890"/>
</dbReference>
<dbReference type="STRING" id="10116.ENSRNOP00000028033"/>
<dbReference type="BindingDB" id="P43428"/>
<dbReference type="ChEMBL" id="CHEMBL4759"/>
<dbReference type="GlyCosmos" id="P43428">
    <property type="glycosylation" value="1 site, No reported glycans"/>
</dbReference>
<dbReference type="GlyGen" id="P43428">
    <property type="glycosylation" value="1 site"/>
</dbReference>
<dbReference type="PhosphoSitePlus" id="P43428"/>
<dbReference type="PaxDb" id="10116-ENSRNOP00000028033"/>
<dbReference type="Ensembl" id="ENSRNOT00000085831.2">
    <property type="protein sequence ID" value="ENSRNOP00000071453.1"/>
    <property type="gene ID" value="ENSRNOG00000053448.2"/>
</dbReference>
<dbReference type="GeneID" id="25634"/>
<dbReference type="KEGG" id="rno:25634"/>
<dbReference type="UCSC" id="RGD:2644">
    <property type="organism name" value="rat"/>
</dbReference>
<dbReference type="AGR" id="RGD:2644"/>
<dbReference type="CTD" id="2538"/>
<dbReference type="RGD" id="2644">
    <property type="gene designation" value="G6pc1"/>
</dbReference>
<dbReference type="eggNOG" id="ENOG502QS9B">
    <property type="taxonomic scope" value="Eukaryota"/>
</dbReference>
<dbReference type="GeneTree" id="ENSGT00950000183207"/>
<dbReference type="HOGENOM" id="CLU_052517_0_0_1"/>
<dbReference type="InParanoid" id="P43428"/>
<dbReference type="OrthoDB" id="6416209at2759"/>
<dbReference type="BRENDA" id="3.1.3.9">
    <property type="organism ID" value="5301"/>
</dbReference>
<dbReference type="Reactome" id="R-RNO-70263">
    <property type="pathway name" value="Gluconeogenesis"/>
</dbReference>
<dbReference type="SABIO-RK" id="P43428"/>
<dbReference type="UniPathway" id="UPA00138"/>
<dbReference type="PRO" id="PR:P43428"/>
<dbReference type="Proteomes" id="UP000002494">
    <property type="component" value="Chromosome 10"/>
</dbReference>
<dbReference type="Bgee" id="ENSRNOG00000051171">
    <property type="expression patterns" value="Expressed in liver and 9 other cell types or tissues"/>
</dbReference>
<dbReference type="GO" id="GO:0005783">
    <property type="term" value="C:endoplasmic reticulum"/>
    <property type="evidence" value="ECO:0000266"/>
    <property type="project" value="RGD"/>
</dbReference>
<dbReference type="GO" id="GO:0005789">
    <property type="term" value="C:endoplasmic reticulum membrane"/>
    <property type="evidence" value="ECO:0007669"/>
    <property type="project" value="UniProtKB-SubCell"/>
</dbReference>
<dbReference type="GO" id="GO:0016020">
    <property type="term" value="C:membrane"/>
    <property type="evidence" value="ECO:0000266"/>
    <property type="project" value="RGD"/>
</dbReference>
<dbReference type="GO" id="GO:0004346">
    <property type="term" value="F:glucose-6-phosphatase activity"/>
    <property type="evidence" value="ECO:0000314"/>
    <property type="project" value="RGD"/>
</dbReference>
<dbReference type="GO" id="GO:0042301">
    <property type="term" value="F:phosphate ion binding"/>
    <property type="evidence" value="ECO:0000266"/>
    <property type="project" value="RGD"/>
</dbReference>
<dbReference type="GO" id="GO:0016773">
    <property type="term" value="F:phosphotransferase activity, alcohol group as acceptor"/>
    <property type="evidence" value="ECO:0000266"/>
    <property type="project" value="RGD"/>
</dbReference>
<dbReference type="GO" id="GO:0032869">
    <property type="term" value="P:cellular response to insulin stimulus"/>
    <property type="evidence" value="ECO:0000270"/>
    <property type="project" value="RGD"/>
</dbReference>
<dbReference type="GO" id="GO:0042632">
    <property type="term" value="P:cholesterol homeostasis"/>
    <property type="evidence" value="ECO:0000266"/>
    <property type="project" value="RGD"/>
</dbReference>
<dbReference type="GO" id="GO:0006094">
    <property type="term" value="P:gluconeogenesis"/>
    <property type="evidence" value="ECO:0000314"/>
    <property type="project" value="RGD"/>
</dbReference>
<dbReference type="GO" id="GO:0051156">
    <property type="term" value="P:glucose 6-phosphate metabolic process"/>
    <property type="evidence" value="ECO:0000314"/>
    <property type="project" value="RGD"/>
</dbReference>
<dbReference type="GO" id="GO:0042593">
    <property type="term" value="P:glucose homeostasis"/>
    <property type="evidence" value="ECO:0000266"/>
    <property type="project" value="RGD"/>
</dbReference>
<dbReference type="GO" id="GO:0015760">
    <property type="term" value="P:glucose-6-phosphate transport"/>
    <property type="evidence" value="ECO:0000266"/>
    <property type="project" value="RGD"/>
</dbReference>
<dbReference type="GO" id="GO:0005980">
    <property type="term" value="P:glycogen catabolic process"/>
    <property type="evidence" value="ECO:0000266"/>
    <property type="project" value="RGD"/>
</dbReference>
<dbReference type="GO" id="GO:0005977">
    <property type="term" value="P:glycogen metabolic process"/>
    <property type="evidence" value="ECO:0000266"/>
    <property type="project" value="RGD"/>
</dbReference>
<dbReference type="GO" id="GO:0055088">
    <property type="term" value="P:lipid homeostasis"/>
    <property type="evidence" value="ECO:0000315"/>
    <property type="project" value="RGD"/>
</dbReference>
<dbReference type="GO" id="GO:0035264">
    <property type="term" value="P:multicellular organism growth"/>
    <property type="evidence" value="ECO:0000266"/>
    <property type="project" value="RGD"/>
</dbReference>
<dbReference type="GO" id="GO:0010468">
    <property type="term" value="P:regulation of gene expression"/>
    <property type="evidence" value="ECO:0000266"/>
    <property type="project" value="RGD"/>
</dbReference>
<dbReference type="GO" id="GO:0009743">
    <property type="term" value="P:response to carbohydrate"/>
    <property type="evidence" value="ECO:0000270"/>
    <property type="project" value="RGD"/>
</dbReference>
<dbReference type="GO" id="GO:0032094">
    <property type="term" value="P:response to food"/>
    <property type="evidence" value="ECO:0000270"/>
    <property type="project" value="RGD"/>
</dbReference>
<dbReference type="GO" id="GO:0032868">
    <property type="term" value="P:response to insulin"/>
    <property type="evidence" value="ECO:0000270"/>
    <property type="project" value="RGD"/>
</dbReference>
<dbReference type="GO" id="GO:0031667">
    <property type="term" value="P:response to nutrient levels"/>
    <property type="evidence" value="ECO:0000270"/>
    <property type="project" value="RGD"/>
</dbReference>
<dbReference type="GO" id="GO:1904638">
    <property type="term" value="P:response to resveratrol"/>
    <property type="evidence" value="ECO:0000270"/>
    <property type="project" value="RGD"/>
</dbReference>
<dbReference type="GO" id="GO:0008202">
    <property type="term" value="P:steroid metabolic process"/>
    <property type="evidence" value="ECO:0000266"/>
    <property type="project" value="RGD"/>
</dbReference>
<dbReference type="GO" id="GO:0006641">
    <property type="term" value="P:triglyceride metabolic process"/>
    <property type="evidence" value="ECO:0000266"/>
    <property type="project" value="RGD"/>
</dbReference>
<dbReference type="GO" id="GO:0046415">
    <property type="term" value="P:urate metabolic process"/>
    <property type="evidence" value="ECO:0000266"/>
    <property type="project" value="RGD"/>
</dbReference>
<dbReference type="CDD" id="cd03381">
    <property type="entry name" value="PAP2_glucose_6_phosphatase"/>
    <property type="match status" value="1"/>
</dbReference>
<dbReference type="FunFam" id="1.20.144.10:FF:000010">
    <property type="entry name" value="Glucose-6-phosphatase"/>
    <property type="match status" value="1"/>
</dbReference>
<dbReference type="Gene3D" id="1.20.144.10">
    <property type="entry name" value="Phosphatidic acid phosphatase type 2/haloperoxidase"/>
    <property type="match status" value="1"/>
</dbReference>
<dbReference type="InterPro" id="IPR016275">
    <property type="entry name" value="Glucose-6-phosphatase"/>
</dbReference>
<dbReference type="InterPro" id="IPR036938">
    <property type="entry name" value="P_Acid_Pase_2/haloperoxi_sf"/>
</dbReference>
<dbReference type="InterPro" id="IPR000326">
    <property type="entry name" value="P_Acid_Pase_2/haloperoxidase"/>
</dbReference>
<dbReference type="PANTHER" id="PTHR12591">
    <property type="entry name" value="GLUCOSE-6-PHOSPHATASE"/>
    <property type="match status" value="1"/>
</dbReference>
<dbReference type="PANTHER" id="PTHR12591:SF3">
    <property type="entry name" value="GLUCOSE-6-PHOSPHATASE CATALYTIC SUBUNIT 1"/>
    <property type="match status" value="1"/>
</dbReference>
<dbReference type="Pfam" id="PF01569">
    <property type="entry name" value="PAP2"/>
    <property type="match status" value="1"/>
</dbReference>
<dbReference type="PIRSF" id="PIRSF000905">
    <property type="entry name" value="Glucose-6-phosphatase"/>
    <property type="match status" value="1"/>
</dbReference>
<dbReference type="SMART" id="SM00014">
    <property type="entry name" value="acidPPc"/>
    <property type="match status" value="1"/>
</dbReference>
<dbReference type="SUPFAM" id="SSF48317">
    <property type="entry name" value="Acid phosphatase/Vanadium-dependent haloperoxidase"/>
    <property type="match status" value="1"/>
</dbReference>
<comment type="function">
    <text evidence="2">Hydrolyzes glucose-6-phosphate to glucose in the endoplasmic reticulum. Forms with the glucose-6-phosphate transporter (SLC37A4/G6PT) the complex responsible for glucose production in the terminal step of glycogenolysis and gluconeogenesis. Hence, it is the key enzyme in homeostatic regulation of blood glucose levels.</text>
</comment>
<comment type="catalytic activity">
    <reaction evidence="2">
        <text>D-glucose 6-phosphate + H2O = D-glucose + phosphate</text>
        <dbReference type="Rhea" id="RHEA:16689"/>
        <dbReference type="ChEBI" id="CHEBI:4167"/>
        <dbReference type="ChEBI" id="CHEBI:15377"/>
        <dbReference type="ChEBI" id="CHEBI:43474"/>
        <dbReference type="ChEBI" id="CHEBI:61548"/>
        <dbReference type="EC" id="3.1.3.9"/>
    </reaction>
</comment>
<comment type="pathway">
    <text evidence="2">Carbohydrate biosynthesis; gluconeogenesis.</text>
</comment>
<comment type="subcellular location">
    <subcellularLocation>
        <location evidence="2">Endoplasmic reticulum membrane</location>
        <topology evidence="3">Multi-pass membrane protein</topology>
    </subcellularLocation>
</comment>
<comment type="similarity">
    <text evidence="4">Belongs to the glucose-6-phosphatase family.</text>
</comment>
<comment type="sequence caution" evidence="4">
    <conflict type="erroneous initiation">
        <sequence resource="EMBL-CDS" id="AAA74381"/>
    </conflict>
</comment>
<comment type="sequence caution" evidence="4">
    <conflict type="erroneous initiation">
        <sequence resource="EMBL-CDS" id="AAH90067"/>
    </conflict>
</comment>
<gene>
    <name type="primary">G6pc1</name>
    <name type="synonym">G6pc</name>
    <name type="synonym">G6pt</name>
</gene>
<accession>P43428</accession>
<accession>Q5FVC9</accession>
<feature type="chain" id="PRO_0000087415" description="Glucose-6-phosphatase catalytic subunit 1">
    <location>
        <begin position="1"/>
        <end position="357"/>
    </location>
</feature>
<feature type="topological domain" description="Lumenal" evidence="2">
    <location>
        <begin position="1"/>
        <end position="28"/>
    </location>
</feature>
<feature type="transmembrane region" description="Helical" evidence="3">
    <location>
        <begin position="29"/>
        <end position="49"/>
    </location>
</feature>
<feature type="topological domain" description="Cytoplasmic" evidence="2">
    <location>
        <begin position="50"/>
        <end position="60"/>
    </location>
</feature>
<feature type="transmembrane region" description="Helical" evidence="3">
    <location>
        <begin position="61"/>
        <end position="81"/>
    </location>
</feature>
<feature type="topological domain" description="Lumenal" evidence="2">
    <location>
        <begin position="82"/>
        <end position="117"/>
    </location>
</feature>
<feature type="transmembrane region" description="Helical" evidence="3">
    <location>
        <begin position="118"/>
        <end position="138"/>
    </location>
</feature>
<feature type="topological domain" description="Cytoplasmic" evidence="2">
    <location>
        <begin position="139"/>
        <end position="147"/>
    </location>
</feature>
<feature type="transmembrane region" description="Helical" evidence="3">
    <location>
        <begin position="148"/>
        <end position="168"/>
    </location>
</feature>
<feature type="topological domain" description="Lumenal" evidence="2">
    <location>
        <begin position="169"/>
        <end position="170"/>
    </location>
</feature>
<feature type="transmembrane region" description="Helical" evidence="3">
    <location>
        <begin position="171"/>
        <end position="191"/>
    </location>
</feature>
<feature type="topological domain" description="Cytoplasmic" evidence="2">
    <location>
        <begin position="192"/>
        <end position="211"/>
    </location>
</feature>
<feature type="transmembrane region" description="Helical" evidence="3">
    <location>
        <begin position="212"/>
        <end position="232"/>
    </location>
</feature>
<feature type="topological domain" description="Lumenal" evidence="2">
    <location>
        <begin position="233"/>
        <end position="254"/>
    </location>
</feature>
<feature type="transmembrane region" description="Helical" evidence="3">
    <location>
        <begin position="255"/>
        <end position="275"/>
    </location>
</feature>
<feature type="topological domain" description="Cytoplasmic" evidence="2">
    <location>
        <begin position="276"/>
        <end position="291"/>
    </location>
</feature>
<feature type="transmembrane region" description="Helical" evidence="3">
    <location>
        <begin position="292"/>
        <end position="312"/>
    </location>
</feature>
<feature type="topological domain" description="Lumenal" evidence="2">
    <location>
        <begin position="313"/>
        <end position="320"/>
    </location>
</feature>
<feature type="transmembrane region" description="Helical" evidence="3">
    <location>
        <begin position="321"/>
        <end position="341"/>
    </location>
</feature>
<feature type="topological domain" description="Cytoplasmic" evidence="2">
    <location>
        <begin position="342"/>
        <end position="357"/>
    </location>
</feature>
<feature type="short sequence motif" description="Prevents secretion from ER" evidence="3">
    <location>
        <begin position="354"/>
        <end position="357"/>
    </location>
</feature>
<feature type="active site" description="Proton donor" evidence="3">
    <location>
        <position position="119"/>
    </location>
</feature>
<feature type="active site" description="Nucleophile" evidence="2">
    <location>
        <position position="176"/>
    </location>
</feature>
<feature type="binding site" evidence="3">
    <location>
        <position position="83"/>
    </location>
    <ligand>
        <name>substrate</name>
    </ligand>
</feature>
<feature type="binding site" evidence="3">
    <location>
        <position position="170"/>
    </location>
    <ligand>
        <name>substrate</name>
    </ligand>
</feature>
<feature type="glycosylation site" description="N-linked (GlcNAc...) asparagine" evidence="1">
    <location>
        <position position="96"/>
    </location>
</feature>
<feature type="sequence conflict" description="In Ref. 2; AAA19966." evidence="4" ref="2">
    <original>G</original>
    <variation>V</variation>
    <location>
        <position position="118"/>
    </location>
</feature>
<name>G6PC1_RAT</name>
<evidence type="ECO:0000250" key="1"/>
<evidence type="ECO:0000250" key="2">
    <source>
        <dbReference type="UniProtKB" id="P35575"/>
    </source>
</evidence>
<evidence type="ECO:0000255" key="3"/>
<evidence type="ECO:0000305" key="4"/>
<sequence>MEERMNVLHDFGIQSTRYLQVNYEDSQDWFVLVSVIADLRNAFYVLFPIWFHIQETVGINLLWVAVVGDWFNLVFKWILFGQRPYWWVLDTDYYSNSSVPLIKQFPVTCETGPGSPSGHAMGTAGVYYVMVTSTLAIFRGKKKSTYGFRCLNVVLWLGYWAVQLNVCLSRIYLAAHFPHQVVAGVLSGIAVAETFSHIRGIYNASLQRYCLITFFLFGFALGFYLLLKGLGVDLLWTLEKAKRWCERPEWVHLDTTPFASLFKNLGTLLGLGLALNSSMYRKSCKGELRKSLPFRLACIVASLGLLHLFDSLKPPSQIESIFYILSFCKSATVPFASVSLIPYCLARLLGQTHKKSL</sequence>
<protein>
    <recommendedName>
        <fullName>Glucose-6-phosphatase catalytic subunit 1</fullName>
        <ecNumber evidence="2">3.1.3.9</ecNumber>
    </recommendedName>
    <alternativeName>
        <fullName>Glucose-6-phosphatase</fullName>
        <shortName>G-6-Pase</shortName>
        <shortName>G6Pase</shortName>
    </alternativeName>
</protein>
<organism>
    <name type="scientific">Rattus norvegicus</name>
    <name type="common">Rat</name>
    <dbReference type="NCBI Taxonomy" id="10116"/>
    <lineage>
        <taxon>Eukaryota</taxon>
        <taxon>Metazoa</taxon>
        <taxon>Chordata</taxon>
        <taxon>Craniata</taxon>
        <taxon>Vertebrata</taxon>
        <taxon>Euteleostomi</taxon>
        <taxon>Mammalia</taxon>
        <taxon>Eutheria</taxon>
        <taxon>Euarchontoglires</taxon>
        <taxon>Glires</taxon>
        <taxon>Rodentia</taxon>
        <taxon>Myomorpha</taxon>
        <taxon>Muroidea</taxon>
        <taxon>Muridae</taxon>
        <taxon>Murinae</taxon>
        <taxon>Rattus</taxon>
    </lineage>
</organism>